<keyword id="KW-0963">Cytoplasm</keyword>
<keyword id="KW-0489">Methyltransferase</keyword>
<keyword id="KW-1185">Reference proteome</keyword>
<keyword id="KW-0808">Transferase</keyword>
<gene>
    <name evidence="2" type="primary">eef1akmt1</name>
    <name type="synonym">n6amt2</name>
    <name type="ORF">zgc:77010</name>
</gene>
<name>EFMT1_DANRE</name>
<reference key="1">
    <citation type="submission" date="2004-02" db="EMBL/GenBank/DDBJ databases">
        <authorList>
            <consortium name="NIH - Zebrafish Gene Collection (ZGC) project"/>
        </authorList>
    </citation>
    <scope>NUCLEOTIDE SEQUENCE [LARGE SCALE MRNA]</scope>
    <source>
        <tissue>Kidney</tissue>
    </source>
</reference>
<proteinExistence type="evidence at transcript level"/>
<dbReference type="EC" id="2.1.1.-"/>
<dbReference type="EMBL" id="BC066508">
    <property type="protein sequence ID" value="AAH66508.1"/>
    <property type="molecule type" value="mRNA"/>
</dbReference>
<dbReference type="RefSeq" id="NP_996970.1">
    <property type="nucleotide sequence ID" value="NM_207087.1"/>
</dbReference>
<dbReference type="SMR" id="Q6NYP8"/>
<dbReference type="FunCoup" id="Q6NYP8">
    <property type="interactions" value="1296"/>
</dbReference>
<dbReference type="STRING" id="7955.ENSDARP00000059401"/>
<dbReference type="PaxDb" id="7955-ENSDARP00000059401"/>
<dbReference type="DNASU" id="404619"/>
<dbReference type="GeneID" id="404619"/>
<dbReference type="KEGG" id="dre:404619"/>
<dbReference type="AGR" id="ZFIN:ZDB-GENE-040426-2551"/>
<dbReference type="CTD" id="221143"/>
<dbReference type="ZFIN" id="ZDB-GENE-040426-2551">
    <property type="gene designation" value="eef1akmt1"/>
</dbReference>
<dbReference type="eggNOG" id="KOG3350">
    <property type="taxonomic scope" value="Eukaryota"/>
</dbReference>
<dbReference type="InParanoid" id="Q6NYP8"/>
<dbReference type="OrthoDB" id="206354at2759"/>
<dbReference type="PhylomeDB" id="Q6NYP8"/>
<dbReference type="Reactome" id="R-DRE-8876725">
    <property type="pathway name" value="Protein methylation"/>
</dbReference>
<dbReference type="PRO" id="PR:Q6NYP8"/>
<dbReference type="Proteomes" id="UP000000437">
    <property type="component" value="Alternate scaffold 9"/>
</dbReference>
<dbReference type="Proteomes" id="UP000000437">
    <property type="component" value="Chromosome 9"/>
</dbReference>
<dbReference type="GO" id="GO:0005737">
    <property type="term" value="C:cytoplasm"/>
    <property type="evidence" value="ECO:0007669"/>
    <property type="project" value="UniProtKB-SubCell"/>
</dbReference>
<dbReference type="GO" id="GO:0008168">
    <property type="term" value="F:methyltransferase activity"/>
    <property type="evidence" value="ECO:0000250"/>
    <property type="project" value="UniProtKB"/>
</dbReference>
<dbReference type="GO" id="GO:0003676">
    <property type="term" value="F:nucleic acid binding"/>
    <property type="evidence" value="ECO:0007669"/>
    <property type="project" value="InterPro"/>
</dbReference>
<dbReference type="GO" id="GO:0016279">
    <property type="term" value="F:protein-lysine N-methyltransferase activity"/>
    <property type="evidence" value="ECO:0000250"/>
    <property type="project" value="UniProtKB"/>
</dbReference>
<dbReference type="GO" id="GO:0018022">
    <property type="term" value="P:peptidyl-lysine methylation"/>
    <property type="evidence" value="ECO:0000250"/>
    <property type="project" value="UniProtKB"/>
</dbReference>
<dbReference type="InterPro" id="IPR002052">
    <property type="entry name" value="DNA_methylase_N6_adenine_CS"/>
</dbReference>
<dbReference type="InterPro" id="IPR019369">
    <property type="entry name" value="Efm5/EEF1AKMT1"/>
</dbReference>
<dbReference type="InterPro" id="IPR041370">
    <property type="entry name" value="Mlase_EEF1AKMT1/ZCCHC4"/>
</dbReference>
<dbReference type="InterPro" id="IPR029063">
    <property type="entry name" value="SAM-dependent_MTases_sf"/>
</dbReference>
<dbReference type="PANTHER" id="PTHR13200">
    <property type="entry name" value="EEF1A LYSINE METHYLTRANSFERASE 1"/>
    <property type="match status" value="1"/>
</dbReference>
<dbReference type="PANTHER" id="PTHR13200:SF0">
    <property type="entry name" value="EEF1A LYSINE METHYLTRANSFERASE 1"/>
    <property type="match status" value="1"/>
</dbReference>
<dbReference type="Pfam" id="PF10237">
    <property type="entry name" value="N6-adenineMlase"/>
    <property type="match status" value="1"/>
</dbReference>
<dbReference type="SUPFAM" id="SSF53335">
    <property type="entry name" value="S-adenosyl-L-methionine-dependent methyltransferases"/>
    <property type="match status" value="1"/>
</dbReference>
<organism>
    <name type="scientific">Danio rerio</name>
    <name type="common">Zebrafish</name>
    <name type="synonym">Brachydanio rerio</name>
    <dbReference type="NCBI Taxonomy" id="7955"/>
    <lineage>
        <taxon>Eukaryota</taxon>
        <taxon>Metazoa</taxon>
        <taxon>Chordata</taxon>
        <taxon>Craniata</taxon>
        <taxon>Vertebrata</taxon>
        <taxon>Euteleostomi</taxon>
        <taxon>Actinopterygii</taxon>
        <taxon>Neopterygii</taxon>
        <taxon>Teleostei</taxon>
        <taxon>Ostariophysi</taxon>
        <taxon>Cypriniformes</taxon>
        <taxon>Danionidae</taxon>
        <taxon>Danioninae</taxon>
        <taxon>Danio</taxon>
    </lineage>
</organism>
<accession>Q6NYP8</accession>
<feature type="chain" id="PRO_0000311297" description="EEF1A lysine methyltransferase 1">
    <location>
        <begin position="1"/>
        <end position="166"/>
    </location>
</feature>
<sequence length="166" mass="18915">MSQFWYSEETASRLAEELLQQAGEHGRIACLSAPSVYQKLKQLESVRSDGVSAVLLEFDRRFAAYGDEFVFYDYNNPLCLPEDLLPQSFDIVIADPPYLSEECLSKVTLTVKHLTKGKILLCTGAIMEEHAGKLLDLKMCSFLPRHNHNLANEFRCYVNYESRLLS</sequence>
<comment type="function">
    <text evidence="2">Protein-lysine methyltransferase that selectively catalyzes the trimethylation of EEF1A at 'Lys-79'.</text>
</comment>
<comment type="catalytic activity">
    <reaction evidence="2">
        <text>L-lysyl-[protein] + 3 S-adenosyl-L-methionine = N(6),N(6),N(6)-trimethyl-L-lysyl-[protein] + 3 S-adenosyl-L-homocysteine + 3 H(+)</text>
        <dbReference type="Rhea" id="RHEA:54192"/>
        <dbReference type="Rhea" id="RHEA-COMP:9752"/>
        <dbReference type="Rhea" id="RHEA-COMP:13826"/>
        <dbReference type="ChEBI" id="CHEBI:15378"/>
        <dbReference type="ChEBI" id="CHEBI:29969"/>
        <dbReference type="ChEBI" id="CHEBI:57856"/>
        <dbReference type="ChEBI" id="CHEBI:59789"/>
        <dbReference type="ChEBI" id="CHEBI:61961"/>
    </reaction>
    <physiologicalReaction direction="left-to-right" evidence="2">
        <dbReference type="Rhea" id="RHEA:54193"/>
    </physiologicalReaction>
</comment>
<comment type="subcellular location">
    <subcellularLocation>
        <location evidence="1">Cytoplasm</location>
    </subcellularLocation>
</comment>
<comment type="similarity">
    <text evidence="3">Belongs to the class I-like SAM-binding methyltransferase superfamily. EFM5 family.</text>
</comment>
<comment type="caution">
    <text evidence="1">Was originally thought to be an N(6)-adenine-specific DNA methyltransferase based on primary sequence and predicted secondary structure.</text>
</comment>
<protein>
    <recommendedName>
        <fullName evidence="2">EEF1A lysine methyltransferase 1</fullName>
        <ecNumber>2.1.1.-</ecNumber>
    </recommendedName>
    <alternativeName>
        <fullName>N(6)-adenine-specific DNA methyltransferase 2</fullName>
    </alternativeName>
    <alternativeName>
        <fullName>Protein-lysine N-methyltransferase n6amt2</fullName>
    </alternativeName>
</protein>
<evidence type="ECO:0000250" key="1">
    <source>
        <dbReference type="UniProtKB" id="P53200"/>
    </source>
</evidence>
<evidence type="ECO:0000250" key="2">
    <source>
        <dbReference type="UniProtKB" id="Q8WVE0"/>
    </source>
</evidence>
<evidence type="ECO:0000305" key="3"/>